<evidence type="ECO:0000255" key="1">
    <source>
        <dbReference type="HAMAP-Rule" id="MF_00414"/>
    </source>
</evidence>
<name>UBIB_PHOLL</name>
<gene>
    <name evidence="1" type="primary">ubiB</name>
    <name type="ordered locus">plu4411</name>
</gene>
<organism>
    <name type="scientific">Photorhabdus laumondii subsp. laumondii (strain DSM 15139 / CIP 105565 / TT01)</name>
    <name type="common">Photorhabdus luminescens subsp. laumondii</name>
    <dbReference type="NCBI Taxonomy" id="243265"/>
    <lineage>
        <taxon>Bacteria</taxon>
        <taxon>Pseudomonadati</taxon>
        <taxon>Pseudomonadota</taxon>
        <taxon>Gammaproteobacteria</taxon>
        <taxon>Enterobacterales</taxon>
        <taxon>Morganellaceae</taxon>
        <taxon>Photorhabdus</taxon>
    </lineage>
</organism>
<reference key="1">
    <citation type="journal article" date="2003" name="Nat. Biotechnol.">
        <title>The genome sequence of the entomopathogenic bacterium Photorhabdus luminescens.</title>
        <authorList>
            <person name="Duchaud E."/>
            <person name="Rusniok C."/>
            <person name="Frangeul L."/>
            <person name="Buchrieser C."/>
            <person name="Givaudan A."/>
            <person name="Taourit S."/>
            <person name="Bocs S."/>
            <person name="Boursaux-Eude C."/>
            <person name="Chandler M."/>
            <person name="Charles J.-F."/>
            <person name="Dassa E."/>
            <person name="Derose R."/>
            <person name="Derzelle S."/>
            <person name="Freyssinet G."/>
            <person name="Gaudriault S."/>
            <person name="Medigue C."/>
            <person name="Lanois A."/>
            <person name="Powell K."/>
            <person name="Siguier P."/>
            <person name="Vincent R."/>
            <person name="Wingate V."/>
            <person name="Zouine M."/>
            <person name="Glaser P."/>
            <person name="Boemare N."/>
            <person name="Danchin A."/>
            <person name="Kunst F."/>
        </authorList>
    </citation>
    <scope>NUCLEOTIDE SEQUENCE [LARGE SCALE GENOMIC DNA]</scope>
    <source>
        <strain>DSM 15139 / CIP 105565 / TT01</strain>
    </source>
</reference>
<protein>
    <recommendedName>
        <fullName evidence="1">Probable protein kinase UbiB</fullName>
        <ecNumber evidence="1">2.7.-.-</ecNumber>
    </recommendedName>
    <alternativeName>
        <fullName evidence="1">Ubiquinone biosynthesis protein UbiB</fullName>
    </alternativeName>
</protein>
<proteinExistence type="inferred from homology"/>
<sequence>MTPGELRRLYLIIRVFLSYGLDELIPRIRLTWPLRFGRYLLFWIPNRHKDKSLGERLRLALQELGPVWIKFGQMLSTRRDLFPPAIADQLALLQDRVASFDGALARQYIETALGGALETWFDDFEPIALASASIAQVHTARLKENGQEIVIKVIRPDILPIIKADIRLMYRLANWVPMLLPDGRRLRPREVVREYEKTLIDELNLLREAANAIQLRRNFENSSTLYVPEIYSDYCRENVLVMERVYGIPVSDIEALEAQNTNMRLLAERGVQVFFTQVFRDSFFHADMHPGNIFVSYEHPEDPFYIGIDYGIVGSLNKDDKRYLAENFIAFFNRDYRKVAELHVDSGWVPSDTNVEDFEFAIRTVCEPIFEKPLAEISFGHVLLNLFNTARRFNMAVQPQLVLLQKTLLYVEGLGRQLYPQLDLWKTAKPFLEEWLHSQVGLPAVIRALKEKVPYWAEKLPELPELVYDSLQQHKHLQVSIEKLSGHLRGQQIKQRQSQYLLGVGATLFLCGSLFLLSGLANIPWLFIGAGTVSWLFGWCRLCKI</sequence>
<comment type="function">
    <text evidence="1">Is probably a protein kinase regulator of UbiI activity which is involved in aerobic coenzyme Q (ubiquinone) biosynthesis.</text>
</comment>
<comment type="pathway">
    <text>Cofactor biosynthesis; ubiquinone biosynthesis [regulation].</text>
</comment>
<comment type="subcellular location">
    <subcellularLocation>
        <location evidence="1">Cell inner membrane</location>
        <topology evidence="1">Single-pass membrane protein</topology>
    </subcellularLocation>
</comment>
<comment type="similarity">
    <text evidence="1">Belongs to the ABC1 family. UbiB subfamily.</text>
</comment>
<accession>Q7MZ83</accession>
<feature type="chain" id="PRO_0000200711" description="Probable protein kinase UbiB">
    <location>
        <begin position="1"/>
        <end position="545"/>
    </location>
</feature>
<feature type="transmembrane region" description="Helical" evidence="1">
    <location>
        <begin position="508"/>
        <end position="528"/>
    </location>
</feature>
<feature type="domain" description="Protein kinase" evidence="1">
    <location>
        <begin position="123"/>
        <end position="501"/>
    </location>
</feature>
<feature type="active site" description="Proton acceptor" evidence="1">
    <location>
        <position position="287"/>
    </location>
</feature>
<feature type="binding site" evidence="1">
    <location>
        <begin position="129"/>
        <end position="137"/>
    </location>
    <ligand>
        <name>ATP</name>
        <dbReference type="ChEBI" id="CHEBI:30616"/>
    </ligand>
</feature>
<feature type="binding site" evidence="1">
    <location>
        <position position="152"/>
    </location>
    <ligand>
        <name>ATP</name>
        <dbReference type="ChEBI" id="CHEBI:30616"/>
    </ligand>
</feature>
<keyword id="KW-0067">ATP-binding</keyword>
<keyword id="KW-0997">Cell inner membrane</keyword>
<keyword id="KW-1003">Cell membrane</keyword>
<keyword id="KW-0418">Kinase</keyword>
<keyword id="KW-0472">Membrane</keyword>
<keyword id="KW-0547">Nucleotide-binding</keyword>
<keyword id="KW-1185">Reference proteome</keyword>
<keyword id="KW-0808">Transferase</keyword>
<keyword id="KW-0812">Transmembrane</keyword>
<keyword id="KW-1133">Transmembrane helix</keyword>
<keyword id="KW-0831">Ubiquinone biosynthesis</keyword>
<dbReference type="EC" id="2.7.-.-" evidence="1"/>
<dbReference type="EMBL" id="BX571873">
    <property type="protein sequence ID" value="CAE16783.1"/>
    <property type="molecule type" value="Genomic_DNA"/>
</dbReference>
<dbReference type="RefSeq" id="WP_011148501.1">
    <property type="nucleotide sequence ID" value="NC_005126.1"/>
</dbReference>
<dbReference type="SMR" id="Q7MZ83"/>
<dbReference type="STRING" id="243265.plu4411"/>
<dbReference type="GeneID" id="48850626"/>
<dbReference type="KEGG" id="plu:plu4411"/>
<dbReference type="eggNOG" id="COG0661">
    <property type="taxonomic scope" value="Bacteria"/>
</dbReference>
<dbReference type="HOGENOM" id="CLU_006533_0_0_6"/>
<dbReference type="OrthoDB" id="9795390at2"/>
<dbReference type="UniPathway" id="UPA00232"/>
<dbReference type="Proteomes" id="UP000002514">
    <property type="component" value="Chromosome"/>
</dbReference>
<dbReference type="GO" id="GO:0005886">
    <property type="term" value="C:plasma membrane"/>
    <property type="evidence" value="ECO:0007669"/>
    <property type="project" value="UniProtKB-SubCell"/>
</dbReference>
<dbReference type="GO" id="GO:0005524">
    <property type="term" value="F:ATP binding"/>
    <property type="evidence" value="ECO:0007669"/>
    <property type="project" value="UniProtKB-KW"/>
</dbReference>
<dbReference type="GO" id="GO:0004672">
    <property type="term" value="F:protein kinase activity"/>
    <property type="evidence" value="ECO:0007669"/>
    <property type="project" value="UniProtKB-UniRule"/>
</dbReference>
<dbReference type="GO" id="GO:0010795">
    <property type="term" value="P:regulation of ubiquinone biosynthetic process"/>
    <property type="evidence" value="ECO:0007669"/>
    <property type="project" value="UniProtKB-UniRule"/>
</dbReference>
<dbReference type="GO" id="GO:0006744">
    <property type="term" value="P:ubiquinone biosynthetic process"/>
    <property type="evidence" value="ECO:0007669"/>
    <property type="project" value="UniProtKB-UniPathway"/>
</dbReference>
<dbReference type="CDD" id="cd13972">
    <property type="entry name" value="UbiB"/>
    <property type="match status" value="1"/>
</dbReference>
<dbReference type="HAMAP" id="MF_00414">
    <property type="entry name" value="UbiB"/>
    <property type="match status" value="1"/>
</dbReference>
<dbReference type="InterPro" id="IPR004147">
    <property type="entry name" value="ABC1_dom"/>
</dbReference>
<dbReference type="InterPro" id="IPR011009">
    <property type="entry name" value="Kinase-like_dom_sf"/>
</dbReference>
<dbReference type="InterPro" id="IPR010232">
    <property type="entry name" value="UbiB"/>
</dbReference>
<dbReference type="InterPro" id="IPR045308">
    <property type="entry name" value="UbiB_bact"/>
</dbReference>
<dbReference type="InterPro" id="IPR050154">
    <property type="entry name" value="UbiB_kinase"/>
</dbReference>
<dbReference type="NCBIfam" id="NF003404">
    <property type="entry name" value="PRK04750.1"/>
    <property type="match status" value="1"/>
</dbReference>
<dbReference type="NCBIfam" id="TIGR01982">
    <property type="entry name" value="UbiB"/>
    <property type="match status" value="1"/>
</dbReference>
<dbReference type="PANTHER" id="PTHR10566">
    <property type="entry name" value="CHAPERONE-ACTIVITY OF BC1 COMPLEX CABC1 -RELATED"/>
    <property type="match status" value="1"/>
</dbReference>
<dbReference type="PANTHER" id="PTHR10566:SF113">
    <property type="entry name" value="PROTEIN ACTIVITY OF BC1 COMPLEX KINASE 7, CHLOROPLASTIC"/>
    <property type="match status" value="1"/>
</dbReference>
<dbReference type="Pfam" id="PF03109">
    <property type="entry name" value="ABC1"/>
    <property type="match status" value="1"/>
</dbReference>
<dbReference type="SUPFAM" id="SSF56112">
    <property type="entry name" value="Protein kinase-like (PK-like)"/>
    <property type="match status" value="1"/>
</dbReference>